<name>COAX_MOOTA</name>
<dbReference type="EC" id="2.7.1.33" evidence="1"/>
<dbReference type="EMBL" id="CP000232">
    <property type="protein sequence ID" value="ABC18484.1"/>
    <property type="molecule type" value="Genomic_DNA"/>
</dbReference>
<dbReference type="RefSeq" id="YP_429027.1">
    <property type="nucleotide sequence ID" value="NC_007644.1"/>
</dbReference>
<dbReference type="SMR" id="Q2RM55"/>
<dbReference type="STRING" id="264732.Moth_0146"/>
<dbReference type="EnsemblBacteria" id="ABC18484">
    <property type="protein sequence ID" value="ABC18484"/>
    <property type="gene ID" value="Moth_0146"/>
</dbReference>
<dbReference type="KEGG" id="mta:Moth_0146"/>
<dbReference type="PATRIC" id="fig|264732.11.peg.156"/>
<dbReference type="eggNOG" id="COG1521">
    <property type="taxonomic scope" value="Bacteria"/>
</dbReference>
<dbReference type="HOGENOM" id="CLU_066627_1_0_9"/>
<dbReference type="OrthoDB" id="9804707at2"/>
<dbReference type="UniPathway" id="UPA00241">
    <property type="reaction ID" value="UER00352"/>
</dbReference>
<dbReference type="GO" id="GO:0005737">
    <property type="term" value="C:cytoplasm"/>
    <property type="evidence" value="ECO:0007669"/>
    <property type="project" value="UniProtKB-SubCell"/>
</dbReference>
<dbReference type="GO" id="GO:0005524">
    <property type="term" value="F:ATP binding"/>
    <property type="evidence" value="ECO:0007669"/>
    <property type="project" value="UniProtKB-UniRule"/>
</dbReference>
<dbReference type="GO" id="GO:0046872">
    <property type="term" value="F:metal ion binding"/>
    <property type="evidence" value="ECO:0007669"/>
    <property type="project" value="UniProtKB-KW"/>
</dbReference>
<dbReference type="GO" id="GO:0004594">
    <property type="term" value="F:pantothenate kinase activity"/>
    <property type="evidence" value="ECO:0007669"/>
    <property type="project" value="UniProtKB-UniRule"/>
</dbReference>
<dbReference type="GO" id="GO:0015937">
    <property type="term" value="P:coenzyme A biosynthetic process"/>
    <property type="evidence" value="ECO:0007669"/>
    <property type="project" value="UniProtKB-UniRule"/>
</dbReference>
<dbReference type="CDD" id="cd24015">
    <property type="entry name" value="ASKHA_NBD_PanK-III"/>
    <property type="match status" value="1"/>
</dbReference>
<dbReference type="Gene3D" id="3.30.420.40">
    <property type="match status" value="2"/>
</dbReference>
<dbReference type="HAMAP" id="MF_01274">
    <property type="entry name" value="Pantothen_kinase_3"/>
    <property type="match status" value="1"/>
</dbReference>
<dbReference type="InterPro" id="IPR043129">
    <property type="entry name" value="ATPase_NBD"/>
</dbReference>
<dbReference type="InterPro" id="IPR004619">
    <property type="entry name" value="Type_III_PanK"/>
</dbReference>
<dbReference type="NCBIfam" id="TIGR00671">
    <property type="entry name" value="baf"/>
    <property type="match status" value="1"/>
</dbReference>
<dbReference type="NCBIfam" id="NF009848">
    <property type="entry name" value="PRK13318.1-6"/>
    <property type="match status" value="1"/>
</dbReference>
<dbReference type="NCBIfam" id="NF009855">
    <property type="entry name" value="PRK13321.1"/>
    <property type="match status" value="1"/>
</dbReference>
<dbReference type="PANTHER" id="PTHR34265">
    <property type="entry name" value="TYPE III PANTOTHENATE KINASE"/>
    <property type="match status" value="1"/>
</dbReference>
<dbReference type="PANTHER" id="PTHR34265:SF1">
    <property type="entry name" value="TYPE III PANTOTHENATE KINASE"/>
    <property type="match status" value="1"/>
</dbReference>
<dbReference type="Pfam" id="PF03309">
    <property type="entry name" value="Pan_kinase"/>
    <property type="match status" value="1"/>
</dbReference>
<dbReference type="SUPFAM" id="SSF53067">
    <property type="entry name" value="Actin-like ATPase domain"/>
    <property type="match status" value="2"/>
</dbReference>
<proteinExistence type="inferred from homology"/>
<feature type="chain" id="PRO_0000267561" description="Type III pantothenate kinase">
    <location>
        <begin position="1"/>
        <end position="254"/>
    </location>
</feature>
<feature type="active site" description="Proton acceptor" evidence="1">
    <location>
        <position position="109"/>
    </location>
</feature>
<feature type="binding site" evidence="1">
    <location>
        <begin position="6"/>
        <end position="13"/>
    </location>
    <ligand>
        <name>ATP</name>
        <dbReference type="ChEBI" id="CHEBI:30616"/>
    </ligand>
</feature>
<feature type="binding site" evidence="1">
    <location>
        <position position="100"/>
    </location>
    <ligand>
        <name>substrate</name>
    </ligand>
</feature>
<feature type="binding site" evidence="1">
    <location>
        <begin position="107"/>
        <end position="110"/>
    </location>
    <ligand>
        <name>substrate</name>
    </ligand>
</feature>
<feature type="binding site" evidence="1">
    <location>
        <position position="129"/>
    </location>
    <ligand>
        <name>K(+)</name>
        <dbReference type="ChEBI" id="CHEBI:29103"/>
    </ligand>
</feature>
<feature type="binding site" evidence="1">
    <location>
        <position position="132"/>
    </location>
    <ligand>
        <name>ATP</name>
        <dbReference type="ChEBI" id="CHEBI:30616"/>
    </ligand>
</feature>
<feature type="binding site" evidence="1">
    <location>
        <position position="184"/>
    </location>
    <ligand>
        <name>substrate</name>
    </ligand>
</feature>
<sequence length="254" mass="27131">MLLAIDVGNTNIVLGIFAGHELKCHWRVASDRQKTADEYGLILRQLAHYQGLDLKEIQGVVLASVVPTLTQVLTEMITKQLGHQPLVIGPGVKTGMPIRFENPREVGADRIVNGVAVYELYGGPAIVVDFGTATTFDAISEKGEYLGGAIAPGIGIATDALFARAAKLPRVELVRPPRLIGKNTVACMQAGIMYGFIGQVEGIITRMQAEMGGKAIVVATGGLAGLIGPEVNCIDRVDPMLTLEGLRIVYERNT</sequence>
<organism>
    <name type="scientific">Moorella thermoacetica (strain ATCC 39073 / JCM 9320)</name>
    <dbReference type="NCBI Taxonomy" id="264732"/>
    <lineage>
        <taxon>Bacteria</taxon>
        <taxon>Bacillati</taxon>
        <taxon>Bacillota</taxon>
        <taxon>Clostridia</taxon>
        <taxon>Moorellales</taxon>
        <taxon>Moorellaceae</taxon>
        <taxon>Moorella</taxon>
    </lineage>
</organism>
<keyword id="KW-0067">ATP-binding</keyword>
<keyword id="KW-0173">Coenzyme A biosynthesis</keyword>
<keyword id="KW-0963">Cytoplasm</keyword>
<keyword id="KW-0418">Kinase</keyword>
<keyword id="KW-0479">Metal-binding</keyword>
<keyword id="KW-0547">Nucleotide-binding</keyword>
<keyword id="KW-0630">Potassium</keyword>
<keyword id="KW-0808">Transferase</keyword>
<evidence type="ECO:0000255" key="1">
    <source>
        <dbReference type="HAMAP-Rule" id="MF_01274"/>
    </source>
</evidence>
<comment type="function">
    <text evidence="1">Catalyzes the phosphorylation of pantothenate (Pan), the first step in CoA biosynthesis.</text>
</comment>
<comment type="catalytic activity">
    <reaction evidence="1">
        <text>(R)-pantothenate + ATP = (R)-4'-phosphopantothenate + ADP + H(+)</text>
        <dbReference type="Rhea" id="RHEA:16373"/>
        <dbReference type="ChEBI" id="CHEBI:10986"/>
        <dbReference type="ChEBI" id="CHEBI:15378"/>
        <dbReference type="ChEBI" id="CHEBI:29032"/>
        <dbReference type="ChEBI" id="CHEBI:30616"/>
        <dbReference type="ChEBI" id="CHEBI:456216"/>
        <dbReference type="EC" id="2.7.1.33"/>
    </reaction>
</comment>
<comment type="cofactor">
    <cofactor evidence="1">
        <name>NH4(+)</name>
        <dbReference type="ChEBI" id="CHEBI:28938"/>
    </cofactor>
    <cofactor evidence="1">
        <name>K(+)</name>
        <dbReference type="ChEBI" id="CHEBI:29103"/>
    </cofactor>
    <text evidence="1">A monovalent cation. Ammonium or potassium.</text>
</comment>
<comment type="pathway">
    <text evidence="1">Cofactor biosynthesis; coenzyme A biosynthesis; CoA from (R)-pantothenate: step 1/5.</text>
</comment>
<comment type="subunit">
    <text evidence="1">Homodimer.</text>
</comment>
<comment type="subcellular location">
    <subcellularLocation>
        <location evidence="1">Cytoplasm</location>
    </subcellularLocation>
</comment>
<comment type="similarity">
    <text evidence="1">Belongs to the type III pantothenate kinase family.</text>
</comment>
<reference key="1">
    <citation type="journal article" date="2008" name="Environ. Microbiol.">
        <title>The complete genome sequence of Moorella thermoacetica (f. Clostridium thermoaceticum).</title>
        <authorList>
            <person name="Pierce E."/>
            <person name="Xie G."/>
            <person name="Barabote R.D."/>
            <person name="Saunders E."/>
            <person name="Han C.S."/>
            <person name="Detter J.C."/>
            <person name="Richardson P."/>
            <person name="Brettin T.S."/>
            <person name="Das A."/>
            <person name="Ljungdahl L.G."/>
            <person name="Ragsdale S.W."/>
        </authorList>
    </citation>
    <scope>NUCLEOTIDE SEQUENCE [LARGE SCALE GENOMIC DNA]</scope>
    <source>
        <strain>ATCC 39073 / JCM 9320</strain>
    </source>
</reference>
<protein>
    <recommendedName>
        <fullName evidence="1">Type III pantothenate kinase</fullName>
        <ecNumber evidence="1">2.7.1.33</ecNumber>
    </recommendedName>
    <alternativeName>
        <fullName evidence="1">PanK-III</fullName>
    </alternativeName>
    <alternativeName>
        <fullName evidence="1">Pantothenic acid kinase</fullName>
    </alternativeName>
</protein>
<gene>
    <name evidence="1" type="primary">coaX</name>
    <name type="ordered locus">Moth_0146</name>
</gene>
<accession>Q2RM55</accession>